<accession>B7VPD7</accession>
<keyword id="KW-0169">Cobalamin biosynthesis</keyword>
<keyword id="KW-0328">Glycosyltransferase</keyword>
<keyword id="KW-0808">Transferase</keyword>
<gene>
    <name evidence="1" type="primary">cobT</name>
    <name type="ordered locus">VS_1702</name>
</gene>
<name>COBT_VIBA3</name>
<organism>
    <name type="scientific">Vibrio atlanticus (strain LGP32)</name>
    <name type="common">Vibrio splendidus (strain Mel32)</name>
    <dbReference type="NCBI Taxonomy" id="575788"/>
    <lineage>
        <taxon>Bacteria</taxon>
        <taxon>Pseudomonadati</taxon>
        <taxon>Pseudomonadota</taxon>
        <taxon>Gammaproteobacteria</taxon>
        <taxon>Vibrionales</taxon>
        <taxon>Vibrionaceae</taxon>
        <taxon>Vibrio</taxon>
    </lineage>
</organism>
<dbReference type="EC" id="2.4.2.21" evidence="1"/>
<dbReference type="EMBL" id="FM954972">
    <property type="protein sequence ID" value="CAV18886.1"/>
    <property type="molecule type" value="Genomic_DNA"/>
</dbReference>
<dbReference type="SMR" id="B7VPD7"/>
<dbReference type="STRING" id="575788.VS_1702"/>
<dbReference type="KEGG" id="vsp:VS_1702"/>
<dbReference type="PATRIC" id="fig|575788.5.peg.2995"/>
<dbReference type="eggNOG" id="COG2038">
    <property type="taxonomic scope" value="Bacteria"/>
</dbReference>
<dbReference type="HOGENOM" id="CLU_002982_0_0_6"/>
<dbReference type="UniPathway" id="UPA00061">
    <property type="reaction ID" value="UER00516"/>
</dbReference>
<dbReference type="Proteomes" id="UP000009100">
    <property type="component" value="Chromosome 1"/>
</dbReference>
<dbReference type="GO" id="GO:0008939">
    <property type="term" value="F:nicotinate-nucleotide-dimethylbenzimidazole phosphoribosyltransferase activity"/>
    <property type="evidence" value="ECO:0007669"/>
    <property type="project" value="UniProtKB-UniRule"/>
</dbReference>
<dbReference type="GO" id="GO:0009236">
    <property type="term" value="P:cobalamin biosynthetic process"/>
    <property type="evidence" value="ECO:0007669"/>
    <property type="project" value="UniProtKB-KW"/>
</dbReference>
<dbReference type="CDD" id="cd02439">
    <property type="entry name" value="DMB-PRT_CobT"/>
    <property type="match status" value="1"/>
</dbReference>
<dbReference type="FunFam" id="3.40.50.10210:FF:000001">
    <property type="entry name" value="Nicotinate-nucleotide--dimethylbenzimidazole phosphoribosyltransferase"/>
    <property type="match status" value="1"/>
</dbReference>
<dbReference type="Gene3D" id="1.10.1610.10">
    <property type="match status" value="1"/>
</dbReference>
<dbReference type="Gene3D" id="3.40.50.10210">
    <property type="match status" value="1"/>
</dbReference>
<dbReference type="HAMAP" id="MF_00230">
    <property type="entry name" value="CobT"/>
    <property type="match status" value="1"/>
</dbReference>
<dbReference type="InterPro" id="IPR003200">
    <property type="entry name" value="Nict_dMeBzImd_PRibTrfase"/>
</dbReference>
<dbReference type="InterPro" id="IPR017846">
    <property type="entry name" value="Nict_dMeBzImd_PRibTrfase_bact"/>
</dbReference>
<dbReference type="InterPro" id="IPR023195">
    <property type="entry name" value="Nict_dMeBzImd_PRibTrfase_N"/>
</dbReference>
<dbReference type="InterPro" id="IPR036087">
    <property type="entry name" value="Nict_dMeBzImd_PRibTrfase_sf"/>
</dbReference>
<dbReference type="NCBIfam" id="TIGR03160">
    <property type="entry name" value="cobT_DBIPRT"/>
    <property type="match status" value="1"/>
</dbReference>
<dbReference type="NCBIfam" id="NF000996">
    <property type="entry name" value="PRK00105.1"/>
    <property type="match status" value="1"/>
</dbReference>
<dbReference type="PANTHER" id="PTHR43463">
    <property type="entry name" value="NICOTINATE-NUCLEOTIDE--DIMETHYLBENZIMIDAZOLE PHOSPHORIBOSYLTRANSFERASE"/>
    <property type="match status" value="1"/>
</dbReference>
<dbReference type="PANTHER" id="PTHR43463:SF1">
    <property type="entry name" value="NICOTINATE-NUCLEOTIDE--DIMETHYLBENZIMIDAZOLE PHOSPHORIBOSYLTRANSFERASE"/>
    <property type="match status" value="1"/>
</dbReference>
<dbReference type="Pfam" id="PF02277">
    <property type="entry name" value="DBI_PRT"/>
    <property type="match status" value="1"/>
</dbReference>
<dbReference type="SUPFAM" id="SSF52733">
    <property type="entry name" value="Nicotinate mononucleotide:5,6-dimethylbenzimidazole phosphoribosyltransferase (CobT)"/>
    <property type="match status" value="1"/>
</dbReference>
<evidence type="ECO:0000255" key="1">
    <source>
        <dbReference type="HAMAP-Rule" id="MF_00230"/>
    </source>
</evidence>
<proteinExistence type="inferred from homology"/>
<sequence>MLDTQYSQYIQHRIDQKTKPLGALGLLEKVAHQLALIQSQGKETAVEHIELNKPRIIIFAGDHGIADEGVSIAPSAVTQQMVLNFLSGGAAINCFCAVNNVEITVVDTGILLPVESDSDMLISQRLGTRTNNFANEAAMSLETVERGIELGTELVSRTISNGTNIIMFGEMGIGNTSSASAILSALANRTADECVGLGTGINNEQLARKVAVVKQGIARCINPDAKEVLSQVGGYEIVQMVGGFLGAYENRTPVLVDGFIVSVAAYVATLIEPSCRDYMIFAHRSEESGHKILLELLDAEPLLDLGLRLGEGTGAALAMPIIRAAAEFYNNMASFASAGVTV</sequence>
<protein>
    <recommendedName>
        <fullName evidence="1">Nicotinate-nucleotide--dimethylbenzimidazole phosphoribosyltransferase</fullName>
        <shortName evidence="1">NN:DBI PRT</shortName>
        <ecNumber evidence="1">2.4.2.21</ecNumber>
    </recommendedName>
    <alternativeName>
        <fullName evidence="1">N(1)-alpha-phosphoribosyltransferase</fullName>
    </alternativeName>
</protein>
<feature type="chain" id="PRO_1000125115" description="Nicotinate-nucleotide--dimethylbenzimidazole phosphoribosyltransferase">
    <location>
        <begin position="1"/>
        <end position="342"/>
    </location>
</feature>
<feature type="active site" description="Proton acceptor" evidence="1">
    <location>
        <position position="311"/>
    </location>
</feature>
<reference key="1">
    <citation type="submission" date="2009-02" db="EMBL/GenBank/DDBJ databases">
        <title>Vibrio splendidus str. LGP32 complete genome.</title>
        <authorList>
            <person name="Mazel D."/>
            <person name="Le Roux F."/>
        </authorList>
    </citation>
    <scope>NUCLEOTIDE SEQUENCE [LARGE SCALE GENOMIC DNA]</scope>
    <source>
        <strain>LGP32</strain>
    </source>
</reference>
<comment type="function">
    <text evidence="1">Catalyzes the synthesis of alpha-ribazole-5'-phosphate from nicotinate mononucleotide (NAMN) and 5,6-dimethylbenzimidazole (DMB).</text>
</comment>
<comment type="catalytic activity">
    <reaction evidence="1">
        <text>5,6-dimethylbenzimidazole + nicotinate beta-D-ribonucleotide = alpha-ribazole 5'-phosphate + nicotinate + H(+)</text>
        <dbReference type="Rhea" id="RHEA:11196"/>
        <dbReference type="ChEBI" id="CHEBI:15378"/>
        <dbReference type="ChEBI" id="CHEBI:15890"/>
        <dbReference type="ChEBI" id="CHEBI:32544"/>
        <dbReference type="ChEBI" id="CHEBI:57502"/>
        <dbReference type="ChEBI" id="CHEBI:57918"/>
        <dbReference type="EC" id="2.4.2.21"/>
    </reaction>
</comment>
<comment type="pathway">
    <text evidence="1">Nucleoside biosynthesis; alpha-ribazole biosynthesis; alpha-ribazole from 5,6-dimethylbenzimidazole: step 1/2.</text>
</comment>
<comment type="similarity">
    <text evidence="1">Belongs to the CobT family.</text>
</comment>